<accession>A8F7A0</accession>
<feature type="chain" id="PRO_1000059119" description="Probable septum site-determining protein MinC">
    <location>
        <begin position="1"/>
        <end position="213"/>
    </location>
</feature>
<sequence length="213" mass="23256">MTIDLIDFKMTKEGLVLVIKDYDNLEDVVNQLTSKISQMSGFFAAGDKIMLMIENNEKHSHDMPRIISILKKMGIEVSQILMGVTAKEGINVRGRMKMVEEGETKSGTKVVKKNLRSGQALVHSGDVIVIGNVHSGAEIMAGGSIVVFGNVKGILRAGLNESDSIVAALSMEPSLIQISEYILREAGSYDEPVVVHVKQNKIVIESAKDVKFQ</sequence>
<dbReference type="EMBL" id="CP000812">
    <property type="protein sequence ID" value="ABV34034.1"/>
    <property type="molecule type" value="Genomic_DNA"/>
</dbReference>
<dbReference type="SMR" id="A8F7A0"/>
<dbReference type="STRING" id="416591.Tlet_1478"/>
<dbReference type="KEGG" id="tle:Tlet_1478"/>
<dbReference type="eggNOG" id="COG0850">
    <property type="taxonomic scope" value="Bacteria"/>
</dbReference>
<dbReference type="HOGENOM" id="CLU_048711_2_1_0"/>
<dbReference type="OrthoDB" id="37128at2"/>
<dbReference type="Proteomes" id="UP000002016">
    <property type="component" value="Chromosome"/>
</dbReference>
<dbReference type="GO" id="GO:0000902">
    <property type="term" value="P:cell morphogenesis"/>
    <property type="evidence" value="ECO:0007669"/>
    <property type="project" value="InterPro"/>
</dbReference>
<dbReference type="GO" id="GO:0000917">
    <property type="term" value="P:division septum assembly"/>
    <property type="evidence" value="ECO:0007669"/>
    <property type="project" value="UniProtKB-KW"/>
</dbReference>
<dbReference type="GO" id="GO:0051302">
    <property type="term" value="P:regulation of cell division"/>
    <property type="evidence" value="ECO:0007669"/>
    <property type="project" value="InterPro"/>
</dbReference>
<dbReference type="GO" id="GO:1901891">
    <property type="term" value="P:regulation of cell septum assembly"/>
    <property type="evidence" value="ECO:0007669"/>
    <property type="project" value="InterPro"/>
</dbReference>
<dbReference type="Gene3D" id="2.160.20.70">
    <property type="match status" value="1"/>
</dbReference>
<dbReference type="Gene3D" id="3.30.750.50">
    <property type="entry name" value="Cell-division inhibitor MinC, N-terminal domain"/>
    <property type="match status" value="1"/>
</dbReference>
<dbReference type="HAMAP" id="MF_00267">
    <property type="entry name" value="MinC"/>
    <property type="match status" value="1"/>
</dbReference>
<dbReference type="InterPro" id="IPR016098">
    <property type="entry name" value="CAP/MinC_C"/>
</dbReference>
<dbReference type="InterPro" id="IPR013033">
    <property type="entry name" value="MinC"/>
</dbReference>
<dbReference type="InterPro" id="IPR036145">
    <property type="entry name" value="MinC_C_sf"/>
</dbReference>
<dbReference type="InterPro" id="IPR007874">
    <property type="entry name" value="MinC_N"/>
</dbReference>
<dbReference type="InterPro" id="IPR005526">
    <property type="entry name" value="Septum_form_inhib_MinC_C"/>
</dbReference>
<dbReference type="NCBIfam" id="TIGR01222">
    <property type="entry name" value="minC"/>
    <property type="match status" value="1"/>
</dbReference>
<dbReference type="NCBIfam" id="NF010598">
    <property type="entry name" value="PRK13992.1"/>
    <property type="match status" value="1"/>
</dbReference>
<dbReference type="PANTHER" id="PTHR34108">
    <property type="entry name" value="SEPTUM SITE-DETERMINING PROTEIN MINC"/>
    <property type="match status" value="1"/>
</dbReference>
<dbReference type="PANTHER" id="PTHR34108:SF1">
    <property type="entry name" value="SEPTUM SITE-DETERMINING PROTEIN MINC"/>
    <property type="match status" value="1"/>
</dbReference>
<dbReference type="Pfam" id="PF03775">
    <property type="entry name" value="MinC_C"/>
    <property type="match status" value="1"/>
</dbReference>
<dbReference type="Pfam" id="PF05209">
    <property type="entry name" value="MinC_N"/>
    <property type="match status" value="1"/>
</dbReference>
<dbReference type="SUPFAM" id="SSF63848">
    <property type="entry name" value="Cell-division inhibitor MinC, C-terminal domain"/>
    <property type="match status" value="1"/>
</dbReference>
<dbReference type="SUPFAM" id="SSF64043">
    <property type="entry name" value="Cell-division inhibitor MinC, N-terminal domain"/>
    <property type="match status" value="1"/>
</dbReference>
<protein>
    <recommendedName>
        <fullName evidence="1">Probable septum site-determining protein MinC</fullName>
    </recommendedName>
</protein>
<name>MINC_PSELT</name>
<proteinExistence type="inferred from homology"/>
<organism>
    <name type="scientific">Pseudothermotoga lettingae (strain ATCC BAA-301 / DSM 14385 / NBRC 107922 / TMO)</name>
    <name type="common">Thermotoga lettingae</name>
    <dbReference type="NCBI Taxonomy" id="416591"/>
    <lineage>
        <taxon>Bacteria</taxon>
        <taxon>Thermotogati</taxon>
        <taxon>Thermotogota</taxon>
        <taxon>Thermotogae</taxon>
        <taxon>Thermotogales</taxon>
        <taxon>Thermotogaceae</taxon>
        <taxon>Pseudothermotoga</taxon>
    </lineage>
</organism>
<evidence type="ECO:0000255" key="1">
    <source>
        <dbReference type="HAMAP-Rule" id="MF_00267"/>
    </source>
</evidence>
<comment type="function">
    <text evidence="1">Cell division inhibitor that blocks the formation of polar Z ring septums. Rapidly oscillates between the poles of the cell to destabilize FtsZ filaments that have formed before they mature into polar Z rings. Prevents FtsZ polymerization.</text>
</comment>
<comment type="subunit">
    <text evidence="1">Interacts with MinD and FtsZ.</text>
</comment>
<comment type="similarity">
    <text evidence="1">Belongs to the MinC family.</text>
</comment>
<keyword id="KW-0131">Cell cycle</keyword>
<keyword id="KW-0132">Cell division</keyword>
<keyword id="KW-1185">Reference proteome</keyword>
<keyword id="KW-0717">Septation</keyword>
<reference key="1">
    <citation type="submission" date="2007-08" db="EMBL/GenBank/DDBJ databases">
        <title>Complete sequence of Thermotoga lettingae TMO.</title>
        <authorList>
            <consortium name="US DOE Joint Genome Institute"/>
            <person name="Copeland A."/>
            <person name="Lucas S."/>
            <person name="Lapidus A."/>
            <person name="Barry K."/>
            <person name="Glavina del Rio T."/>
            <person name="Dalin E."/>
            <person name="Tice H."/>
            <person name="Pitluck S."/>
            <person name="Foster B."/>
            <person name="Bruce D."/>
            <person name="Schmutz J."/>
            <person name="Larimer F."/>
            <person name="Land M."/>
            <person name="Hauser L."/>
            <person name="Kyrpides N."/>
            <person name="Mikhailova N."/>
            <person name="Nelson K."/>
            <person name="Gogarten J.P."/>
            <person name="Noll K."/>
            <person name="Richardson P."/>
        </authorList>
    </citation>
    <scope>NUCLEOTIDE SEQUENCE [LARGE SCALE GENOMIC DNA]</scope>
    <source>
        <strain>ATCC BAA-301 / DSM 14385 / NBRC 107922 / TMO</strain>
    </source>
</reference>
<gene>
    <name evidence="1" type="primary">minC</name>
    <name type="ordered locus">Tlet_1478</name>
</gene>